<dbReference type="EC" id="2.7.7.4" evidence="2"/>
<dbReference type="EMBL" id="AE007869">
    <property type="protein sequence ID" value="AAK86623.1"/>
    <property type="molecule type" value="Genomic_DNA"/>
</dbReference>
<dbReference type="PIR" id="AH2676">
    <property type="entry name" value="AH2676"/>
</dbReference>
<dbReference type="PIR" id="F97458">
    <property type="entry name" value="F97458"/>
</dbReference>
<dbReference type="RefSeq" id="NP_353838.1">
    <property type="nucleotide sequence ID" value="NC_003062.2"/>
</dbReference>
<dbReference type="RefSeq" id="WP_010971170.1">
    <property type="nucleotide sequence ID" value="NC_003062.2"/>
</dbReference>
<dbReference type="SMR" id="Q8UH69"/>
<dbReference type="STRING" id="176299.Atu0816"/>
<dbReference type="EnsemblBacteria" id="AAK86623">
    <property type="protein sequence ID" value="AAK86623"/>
    <property type="gene ID" value="Atu0816"/>
</dbReference>
<dbReference type="GeneID" id="1132854"/>
<dbReference type="KEGG" id="atu:Atu0816"/>
<dbReference type="PATRIC" id="fig|176299.10.peg.813"/>
<dbReference type="eggNOG" id="COG2895">
    <property type="taxonomic scope" value="Bacteria"/>
</dbReference>
<dbReference type="HOGENOM" id="CLU_007265_5_2_5"/>
<dbReference type="OrthoDB" id="9804504at2"/>
<dbReference type="PhylomeDB" id="Q8UH69"/>
<dbReference type="BioCyc" id="AGRO:ATU0816-MONOMER"/>
<dbReference type="UniPathway" id="UPA00140">
    <property type="reaction ID" value="UER00204"/>
</dbReference>
<dbReference type="Proteomes" id="UP000000813">
    <property type="component" value="Chromosome circular"/>
</dbReference>
<dbReference type="GO" id="GO:0005524">
    <property type="term" value="F:ATP binding"/>
    <property type="evidence" value="ECO:0007669"/>
    <property type="project" value="UniProtKB-KW"/>
</dbReference>
<dbReference type="GO" id="GO:0005525">
    <property type="term" value="F:GTP binding"/>
    <property type="evidence" value="ECO:0007669"/>
    <property type="project" value="UniProtKB-UniRule"/>
</dbReference>
<dbReference type="GO" id="GO:0003924">
    <property type="term" value="F:GTPase activity"/>
    <property type="evidence" value="ECO:0007669"/>
    <property type="project" value="InterPro"/>
</dbReference>
<dbReference type="GO" id="GO:0004781">
    <property type="term" value="F:sulfate adenylyltransferase (ATP) activity"/>
    <property type="evidence" value="ECO:0007669"/>
    <property type="project" value="UniProtKB-UniRule"/>
</dbReference>
<dbReference type="GO" id="GO:0070814">
    <property type="term" value="P:hydrogen sulfide biosynthetic process"/>
    <property type="evidence" value="ECO:0007669"/>
    <property type="project" value="UniProtKB-UniRule"/>
</dbReference>
<dbReference type="GO" id="GO:0000103">
    <property type="term" value="P:sulfate assimilation"/>
    <property type="evidence" value="ECO:0007669"/>
    <property type="project" value="UniProtKB-UniRule"/>
</dbReference>
<dbReference type="CDD" id="cd04166">
    <property type="entry name" value="CysN_ATPS"/>
    <property type="match status" value="1"/>
</dbReference>
<dbReference type="CDD" id="cd03695">
    <property type="entry name" value="CysN_NodQ_II"/>
    <property type="match status" value="1"/>
</dbReference>
<dbReference type="CDD" id="cd04095">
    <property type="entry name" value="CysN_NoDQ_III"/>
    <property type="match status" value="1"/>
</dbReference>
<dbReference type="FunFam" id="3.40.50.300:FF:000119">
    <property type="entry name" value="Sulfate adenylyltransferase subunit 1"/>
    <property type="match status" value="1"/>
</dbReference>
<dbReference type="Gene3D" id="3.40.50.300">
    <property type="entry name" value="P-loop containing nucleotide triphosphate hydrolases"/>
    <property type="match status" value="1"/>
</dbReference>
<dbReference type="Gene3D" id="2.40.30.10">
    <property type="entry name" value="Translation factors"/>
    <property type="match status" value="2"/>
</dbReference>
<dbReference type="HAMAP" id="MF_00062">
    <property type="entry name" value="Sulf_adenylyltr_sub1"/>
    <property type="match status" value="1"/>
</dbReference>
<dbReference type="InterPro" id="IPR041757">
    <property type="entry name" value="CysN_GTP-bd"/>
</dbReference>
<dbReference type="InterPro" id="IPR044138">
    <property type="entry name" value="CysN_II"/>
</dbReference>
<dbReference type="InterPro" id="IPR044139">
    <property type="entry name" value="CysN_NoDQ_III"/>
</dbReference>
<dbReference type="InterPro" id="IPR031157">
    <property type="entry name" value="G_TR_CS"/>
</dbReference>
<dbReference type="InterPro" id="IPR054696">
    <property type="entry name" value="GTP-eEF1A_C"/>
</dbReference>
<dbReference type="InterPro" id="IPR027417">
    <property type="entry name" value="P-loop_NTPase"/>
</dbReference>
<dbReference type="InterPro" id="IPR011779">
    <property type="entry name" value="SO4_adenylTrfase_lsu"/>
</dbReference>
<dbReference type="InterPro" id="IPR000795">
    <property type="entry name" value="T_Tr_GTP-bd_dom"/>
</dbReference>
<dbReference type="InterPro" id="IPR050100">
    <property type="entry name" value="TRAFAC_GTPase_members"/>
</dbReference>
<dbReference type="InterPro" id="IPR009000">
    <property type="entry name" value="Transl_B-barrel_sf"/>
</dbReference>
<dbReference type="InterPro" id="IPR009001">
    <property type="entry name" value="Transl_elong_EF1A/Init_IF2_C"/>
</dbReference>
<dbReference type="NCBIfam" id="TIGR02034">
    <property type="entry name" value="CysN"/>
    <property type="match status" value="1"/>
</dbReference>
<dbReference type="NCBIfam" id="NF003478">
    <property type="entry name" value="PRK05124.1"/>
    <property type="match status" value="1"/>
</dbReference>
<dbReference type="PANTHER" id="PTHR23115">
    <property type="entry name" value="TRANSLATION FACTOR"/>
    <property type="match status" value="1"/>
</dbReference>
<dbReference type="Pfam" id="PF22594">
    <property type="entry name" value="GTP-eEF1A_C"/>
    <property type="match status" value="1"/>
</dbReference>
<dbReference type="Pfam" id="PF00009">
    <property type="entry name" value="GTP_EFTU"/>
    <property type="match status" value="1"/>
</dbReference>
<dbReference type="PRINTS" id="PR00315">
    <property type="entry name" value="ELONGATNFCT"/>
</dbReference>
<dbReference type="SUPFAM" id="SSF50465">
    <property type="entry name" value="EF-Tu/eEF-1alpha/eIF2-gamma C-terminal domain"/>
    <property type="match status" value="1"/>
</dbReference>
<dbReference type="SUPFAM" id="SSF52540">
    <property type="entry name" value="P-loop containing nucleoside triphosphate hydrolases"/>
    <property type="match status" value="1"/>
</dbReference>
<dbReference type="SUPFAM" id="SSF50447">
    <property type="entry name" value="Translation proteins"/>
    <property type="match status" value="1"/>
</dbReference>
<dbReference type="PROSITE" id="PS00301">
    <property type="entry name" value="G_TR_1"/>
    <property type="match status" value="1"/>
</dbReference>
<dbReference type="PROSITE" id="PS51722">
    <property type="entry name" value="G_TR_2"/>
    <property type="match status" value="1"/>
</dbReference>
<comment type="function">
    <text evidence="2">With CysD forms the ATP sulfurylase (ATPS) that catalyzes the adenylation of sulfate producing adenosine 5'-phosphosulfate (APS) and diphosphate, the first enzymatic step in sulfur assimilation pathway. APS synthesis involves the formation of a high-energy phosphoric-sulfuric acid anhydride bond driven by GTP hydrolysis by CysN coupled to ATP hydrolysis by CysD.</text>
</comment>
<comment type="catalytic activity">
    <reaction evidence="2">
        <text>sulfate + ATP + H(+) = adenosine 5'-phosphosulfate + diphosphate</text>
        <dbReference type="Rhea" id="RHEA:18133"/>
        <dbReference type="ChEBI" id="CHEBI:15378"/>
        <dbReference type="ChEBI" id="CHEBI:16189"/>
        <dbReference type="ChEBI" id="CHEBI:30616"/>
        <dbReference type="ChEBI" id="CHEBI:33019"/>
        <dbReference type="ChEBI" id="CHEBI:58243"/>
        <dbReference type="EC" id="2.7.7.4"/>
    </reaction>
</comment>
<comment type="pathway">
    <text evidence="2">Sulfur metabolism; hydrogen sulfide biosynthesis; sulfite from sulfate: step 1/3.</text>
</comment>
<comment type="subunit">
    <text evidence="2">Heterodimer composed of CysD, the smaller subunit, and CysN.</text>
</comment>
<comment type="similarity">
    <text evidence="2">Belongs to the TRAFAC class translation factor GTPase superfamily. Classic translation factor GTPase family. CysN/NodQ subfamily.</text>
</comment>
<gene>
    <name evidence="2" type="primary">cysN</name>
    <name type="ordered locus">Atu0816</name>
    <name type="ORF">AGR_C_1495</name>
</gene>
<keyword id="KW-0067">ATP-binding</keyword>
<keyword id="KW-0342">GTP-binding</keyword>
<keyword id="KW-0547">Nucleotide-binding</keyword>
<keyword id="KW-0548">Nucleotidyltransferase</keyword>
<keyword id="KW-1185">Reference proteome</keyword>
<keyword id="KW-0808">Transferase</keyword>
<organism>
    <name type="scientific">Agrobacterium fabrum (strain C58 / ATCC 33970)</name>
    <name type="common">Agrobacterium tumefaciens (strain C58)</name>
    <dbReference type="NCBI Taxonomy" id="176299"/>
    <lineage>
        <taxon>Bacteria</taxon>
        <taxon>Pseudomonadati</taxon>
        <taxon>Pseudomonadota</taxon>
        <taxon>Alphaproteobacteria</taxon>
        <taxon>Hyphomicrobiales</taxon>
        <taxon>Rhizobiaceae</taxon>
        <taxon>Rhizobium/Agrobacterium group</taxon>
        <taxon>Agrobacterium</taxon>
        <taxon>Agrobacterium tumefaciens complex</taxon>
    </lineage>
</organism>
<protein>
    <recommendedName>
        <fullName evidence="2">Sulfate adenylyltransferase subunit 1</fullName>
        <ecNumber evidence="2">2.7.7.4</ecNumber>
    </recommendedName>
    <alternativeName>
        <fullName evidence="2">ATP-sulfurylase large subunit</fullName>
    </alternativeName>
    <alternativeName>
        <fullName evidence="2">Sulfate adenylate transferase</fullName>
        <shortName evidence="2">SAT</shortName>
    </alternativeName>
</protein>
<proteinExistence type="inferred from homology"/>
<name>CYSN_AGRFC</name>
<sequence length="494" mass="53221">MSAAAANTPSSSATILPFAEHSKVARDTRPLRLITCGSVDDGKSTLIGRLLWDTKAVKEDQAATLHRDSGKQNDLGLPDFALLLDGLQAEREQGITIDVAYRYFATDRRAFIVADTPGHEQYTRNMATGASTADLAVLLVDARTGILEQTRRHATIAALMGIRQFVLAVNKIDLTNYDKAGFELIAHEFRDFASDLGIKQITAIPMSALKGENVVLSGKASMPWYEGPTLVETLELATVRSTQSGGFRLPVQRVSRPGESFRGYQGTVAGGSVKPGDSVVVLPSGMVANVKQIVTFDLVRNAAVAGDAVTLVLDRQVDVSRGDMIVSIEAQPLTGLAFDAQIVALQPGGIEAGKRYWLKSASRRQRVSVQPVSQLNLREGEWQAHETSLPMNAIGKVRLSFDETAIFDPYEQNRATGSFILIDPDTNNTVAGGMISAKRSTGATEEQGDRVILSLPAGLAEKLLAGELLAKHRDEIDIRRTDAATASRLIGDLD</sequence>
<feature type="chain" id="PRO_0000091518" description="Sulfate adenylyltransferase subunit 1">
    <location>
        <begin position="1"/>
        <end position="494"/>
    </location>
</feature>
<feature type="domain" description="tr-type G">
    <location>
        <begin position="28"/>
        <end position="242"/>
    </location>
</feature>
<feature type="region of interest" description="G1" evidence="1">
    <location>
        <begin position="37"/>
        <end position="44"/>
    </location>
</feature>
<feature type="region of interest" description="G2" evidence="1">
    <location>
        <begin position="94"/>
        <end position="98"/>
    </location>
</feature>
<feature type="region of interest" description="G3" evidence="1">
    <location>
        <begin position="115"/>
        <end position="118"/>
    </location>
</feature>
<feature type="region of interest" description="G4" evidence="1">
    <location>
        <begin position="170"/>
        <end position="173"/>
    </location>
</feature>
<feature type="region of interest" description="G5" evidence="1">
    <location>
        <begin position="207"/>
        <end position="209"/>
    </location>
</feature>
<feature type="binding site" evidence="2">
    <location>
        <begin position="37"/>
        <end position="44"/>
    </location>
    <ligand>
        <name>GTP</name>
        <dbReference type="ChEBI" id="CHEBI:37565"/>
    </ligand>
</feature>
<feature type="binding site" evidence="2">
    <location>
        <begin position="115"/>
        <end position="119"/>
    </location>
    <ligand>
        <name>GTP</name>
        <dbReference type="ChEBI" id="CHEBI:37565"/>
    </ligand>
</feature>
<feature type="binding site" evidence="2">
    <location>
        <begin position="170"/>
        <end position="173"/>
    </location>
    <ligand>
        <name>GTP</name>
        <dbReference type="ChEBI" id="CHEBI:37565"/>
    </ligand>
</feature>
<reference key="1">
    <citation type="journal article" date="2001" name="Science">
        <title>The genome of the natural genetic engineer Agrobacterium tumefaciens C58.</title>
        <authorList>
            <person name="Wood D.W."/>
            <person name="Setubal J.C."/>
            <person name="Kaul R."/>
            <person name="Monks D.E."/>
            <person name="Kitajima J.P."/>
            <person name="Okura V.K."/>
            <person name="Zhou Y."/>
            <person name="Chen L."/>
            <person name="Wood G.E."/>
            <person name="Almeida N.F. Jr."/>
            <person name="Woo L."/>
            <person name="Chen Y."/>
            <person name="Paulsen I.T."/>
            <person name="Eisen J.A."/>
            <person name="Karp P.D."/>
            <person name="Bovee D. Sr."/>
            <person name="Chapman P."/>
            <person name="Clendenning J."/>
            <person name="Deatherage G."/>
            <person name="Gillet W."/>
            <person name="Grant C."/>
            <person name="Kutyavin T."/>
            <person name="Levy R."/>
            <person name="Li M.-J."/>
            <person name="McClelland E."/>
            <person name="Palmieri A."/>
            <person name="Raymond C."/>
            <person name="Rouse G."/>
            <person name="Saenphimmachak C."/>
            <person name="Wu Z."/>
            <person name="Romero P."/>
            <person name="Gordon D."/>
            <person name="Zhang S."/>
            <person name="Yoo H."/>
            <person name="Tao Y."/>
            <person name="Biddle P."/>
            <person name="Jung M."/>
            <person name="Krespan W."/>
            <person name="Perry M."/>
            <person name="Gordon-Kamm B."/>
            <person name="Liao L."/>
            <person name="Kim S."/>
            <person name="Hendrick C."/>
            <person name="Zhao Z.-Y."/>
            <person name="Dolan M."/>
            <person name="Chumley F."/>
            <person name="Tingey S.V."/>
            <person name="Tomb J.-F."/>
            <person name="Gordon M.P."/>
            <person name="Olson M.V."/>
            <person name="Nester E.W."/>
        </authorList>
    </citation>
    <scope>NUCLEOTIDE SEQUENCE [LARGE SCALE GENOMIC DNA]</scope>
    <source>
        <strain>C58 / ATCC 33970</strain>
    </source>
</reference>
<reference key="2">
    <citation type="journal article" date="2001" name="Science">
        <title>Genome sequence of the plant pathogen and biotechnology agent Agrobacterium tumefaciens C58.</title>
        <authorList>
            <person name="Goodner B."/>
            <person name="Hinkle G."/>
            <person name="Gattung S."/>
            <person name="Miller N."/>
            <person name="Blanchard M."/>
            <person name="Qurollo B."/>
            <person name="Goldman B.S."/>
            <person name="Cao Y."/>
            <person name="Askenazi M."/>
            <person name="Halling C."/>
            <person name="Mullin L."/>
            <person name="Houmiel K."/>
            <person name="Gordon J."/>
            <person name="Vaudin M."/>
            <person name="Iartchouk O."/>
            <person name="Epp A."/>
            <person name="Liu F."/>
            <person name="Wollam C."/>
            <person name="Allinger M."/>
            <person name="Doughty D."/>
            <person name="Scott C."/>
            <person name="Lappas C."/>
            <person name="Markelz B."/>
            <person name="Flanagan C."/>
            <person name="Crowell C."/>
            <person name="Gurson J."/>
            <person name="Lomo C."/>
            <person name="Sear C."/>
            <person name="Strub G."/>
            <person name="Cielo C."/>
            <person name="Slater S."/>
        </authorList>
    </citation>
    <scope>NUCLEOTIDE SEQUENCE [LARGE SCALE GENOMIC DNA]</scope>
    <source>
        <strain>C58 / ATCC 33970</strain>
    </source>
</reference>
<evidence type="ECO:0000250" key="1"/>
<evidence type="ECO:0000255" key="2">
    <source>
        <dbReference type="HAMAP-Rule" id="MF_00062"/>
    </source>
</evidence>
<accession>Q8UH69</accession>